<proteinExistence type="inferred from homology"/>
<comment type="function">
    <text evidence="1">Catalyzes the oxidation of 5,10-methylenetetrahydrofolate to 5,10-methenyltetrahydrofolate and then the hydrolysis of 5,10-methenyltetrahydrofolate to 10-formyltetrahydrofolate.</text>
</comment>
<comment type="catalytic activity">
    <reaction evidence="1">
        <text>(6R)-5,10-methylene-5,6,7,8-tetrahydrofolate + NADP(+) = (6R)-5,10-methenyltetrahydrofolate + NADPH</text>
        <dbReference type="Rhea" id="RHEA:22812"/>
        <dbReference type="ChEBI" id="CHEBI:15636"/>
        <dbReference type="ChEBI" id="CHEBI:57455"/>
        <dbReference type="ChEBI" id="CHEBI:57783"/>
        <dbReference type="ChEBI" id="CHEBI:58349"/>
        <dbReference type="EC" id="1.5.1.5"/>
    </reaction>
</comment>
<comment type="catalytic activity">
    <reaction evidence="1">
        <text>(6R)-5,10-methenyltetrahydrofolate + H2O = (6R)-10-formyltetrahydrofolate + H(+)</text>
        <dbReference type="Rhea" id="RHEA:23700"/>
        <dbReference type="ChEBI" id="CHEBI:15377"/>
        <dbReference type="ChEBI" id="CHEBI:15378"/>
        <dbReference type="ChEBI" id="CHEBI:57455"/>
        <dbReference type="ChEBI" id="CHEBI:195366"/>
        <dbReference type="EC" id="3.5.4.9"/>
    </reaction>
</comment>
<comment type="pathway">
    <text evidence="1">One-carbon metabolism; tetrahydrofolate interconversion.</text>
</comment>
<comment type="subunit">
    <text evidence="1">Homodimer.</text>
</comment>
<comment type="similarity">
    <text evidence="1">Belongs to the tetrahydrofolate dehydrogenase/cyclohydrolase family.</text>
</comment>
<feature type="chain" id="PRO_0000305873" description="Bifunctional protein FolD">
    <location>
        <begin position="1"/>
        <end position="277"/>
    </location>
</feature>
<feature type="binding site" evidence="1">
    <location>
        <begin position="160"/>
        <end position="162"/>
    </location>
    <ligand>
        <name>NADP(+)</name>
        <dbReference type="ChEBI" id="CHEBI:58349"/>
    </ligand>
</feature>
<feature type="binding site" evidence="1">
    <location>
        <position position="185"/>
    </location>
    <ligand>
        <name>NADP(+)</name>
        <dbReference type="ChEBI" id="CHEBI:58349"/>
    </ligand>
</feature>
<feature type="binding site" evidence="1">
    <location>
        <position position="226"/>
    </location>
    <ligand>
        <name>NADP(+)</name>
        <dbReference type="ChEBI" id="CHEBI:58349"/>
    </ligand>
</feature>
<protein>
    <recommendedName>
        <fullName evidence="1">Bifunctional protein FolD</fullName>
    </recommendedName>
    <domain>
        <recommendedName>
            <fullName evidence="1">Methylenetetrahydrofolate dehydrogenase</fullName>
            <ecNumber evidence="1">1.5.1.5</ecNumber>
        </recommendedName>
    </domain>
    <domain>
        <recommendedName>
            <fullName evidence="1">Methenyltetrahydrofolate cyclohydrolase</fullName>
            <ecNumber evidence="1">3.5.4.9</ecNumber>
        </recommendedName>
    </domain>
</protein>
<name>FOLD_RUTMC</name>
<reference key="1">
    <citation type="journal article" date="2007" name="Science">
        <title>The Calyptogena magnifica chemoautotrophic symbiont genome.</title>
        <authorList>
            <person name="Newton I.L.G."/>
            <person name="Woyke T."/>
            <person name="Auchtung T.A."/>
            <person name="Dilly G.F."/>
            <person name="Dutton R.J."/>
            <person name="Fisher M.C."/>
            <person name="Fontanez K.M."/>
            <person name="Lau E."/>
            <person name="Stewart F.J."/>
            <person name="Richardson P.M."/>
            <person name="Barry K.W."/>
            <person name="Saunders E."/>
            <person name="Detter J.C."/>
            <person name="Wu D."/>
            <person name="Eisen J.A."/>
            <person name="Cavanaugh C.M."/>
        </authorList>
    </citation>
    <scope>NUCLEOTIDE SEQUENCE [LARGE SCALE GENOMIC DNA]</scope>
</reference>
<sequence>MNIIDGKQIAQNLRANIKLKVDALDRKPGLAVILVGDDEASEVYVRNKDNACKEVGFYSKKINKPINTTQAELLSEIECLNNSDKIDGILVQLPLPKHLDANLVIEAISPKKDIDGFHSENIGKLMQNKPFLRPCTSKGVMMIFEMIGVNLVGKNCVVVGASNIVGRPMACELLNAQATVTICNSKTKNLSNKLKQADIVVVAVGIAQMIQKDWIKPGSIVIDAGINRLDNNQLVGDVDFESVMQVASWITPVPGGVGPMTIAALLENTLIAYEGKI</sequence>
<gene>
    <name evidence="1" type="primary">folD</name>
    <name type="ordered locus">Rmag_0840</name>
</gene>
<organism>
    <name type="scientific">Ruthia magnifica subsp. Calyptogena magnifica</name>
    <dbReference type="NCBI Taxonomy" id="413404"/>
    <lineage>
        <taxon>Bacteria</taxon>
        <taxon>Pseudomonadati</taxon>
        <taxon>Pseudomonadota</taxon>
        <taxon>Gammaproteobacteria</taxon>
        <taxon>Candidatus Pseudothioglobaceae</taxon>
        <taxon>Candidatus Ruthturnera</taxon>
    </lineage>
</organism>
<keyword id="KW-0028">Amino-acid biosynthesis</keyword>
<keyword id="KW-0368">Histidine biosynthesis</keyword>
<keyword id="KW-0378">Hydrolase</keyword>
<keyword id="KW-0486">Methionine biosynthesis</keyword>
<keyword id="KW-0511">Multifunctional enzyme</keyword>
<keyword id="KW-0521">NADP</keyword>
<keyword id="KW-0554">One-carbon metabolism</keyword>
<keyword id="KW-0560">Oxidoreductase</keyword>
<keyword id="KW-0658">Purine biosynthesis</keyword>
<accession>A1AXA0</accession>
<evidence type="ECO:0000255" key="1">
    <source>
        <dbReference type="HAMAP-Rule" id="MF_01576"/>
    </source>
</evidence>
<dbReference type="EC" id="1.5.1.5" evidence="1"/>
<dbReference type="EC" id="3.5.4.9" evidence="1"/>
<dbReference type="EMBL" id="CP000488">
    <property type="protein sequence ID" value="ABL02557.1"/>
    <property type="molecule type" value="Genomic_DNA"/>
</dbReference>
<dbReference type="RefSeq" id="WP_011738182.1">
    <property type="nucleotide sequence ID" value="NC_008610.1"/>
</dbReference>
<dbReference type="SMR" id="A1AXA0"/>
<dbReference type="STRING" id="413404.Rmag_0840"/>
<dbReference type="KEGG" id="rma:Rmag_0840"/>
<dbReference type="eggNOG" id="COG0190">
    <property type="taxonomic scope" value="Bacteria"/>
</dbReference>
<dbReference type="HOGENOM" id="CLU_034045_2_1_6"/>
<dbReference type="OrthoDB" id="9803580at2"/>
<dbReference type="UniPathway" id="UPA00193"/>
<dbReference type="Proteomes" id="UP000002587">
    <property type="component" value="Chromosome"/>
</dbReference>
<dbReference type="GO" id="GO:0005829">
    <property type="term" value="C:cytosol"/>
    <property type="evidence" value="ECO:0007669"/>
    <property type="project" value="TreeGrafter"/>
</dbReference>
<dbReference type="GO" id="GO:0004477">
    <property type="term" value="F:methenyltetrahydrofolate cyclohydrolase activity"/>
    <property type="evidence" value="ECO:0007669"/>
    <property type="project" value="UniProtKB-UniRule"/>
</dbReference>
<dbReference type="GO" id="GO:0004488">
    <property type="term" value="F:methylenetetrahydrofolate dehydrogenase (NADP+) activity"/>
    <property type="evidence" value="ECO:0007669"/>
    <property type="project" value="UniProtKB-UniRule"/>
</dbReference>
<dbReference type="GO" id="GO:0000105">
    <property type="term" value="P:L-histidine biosynthetic process"/>
    <property type="evidence" value="ECO:0007669"/>
    <property type="project" value="UniProtKB-KW"/>
</dbReference>
<dbReference type="GO" id="GO:0009086">
    <property type="term" value="P:methionine biosynthetic process"/>
    <property type="evidence" value="ECO:0007669"/>
    <property type="project" value="UniProtKB-KW"/>
</dbReference>
<dbReference type="GO" id="GO:0006164">
    <property type="term" value="P:purine nucleotide biosynthetic process"/>
    <property type="evidence" value="ECO:0007669"/>
    <property type="project" value="UniProtKB-KW"/>
</dbReference>
<dbReference type="GO" id="GO:0035999">
    <property type="term" value="P:tetrahydrofolate interconversion"/>
    <property type="evidence" value="ECO:0007669"/>
    <property type="project" value="UniProtKB-UniRule"/>
</dbReference>
<dbReference type="CDD" id="cd01080">
    <property type="entry name" value="NAD_bind_m-THF_DH_Cyclohyd"/>
    <property type="match status" value="1"/>
</dbReference>
<dbReference type="FunFam" id="3.40.50.720:FF:000094">
    <property type="entry name" value="Bifunctional protein FolD"/>
    <property type="match status" value="1"/>
</dbReference>
<dbReference type="FunFam" id="3.40.50.10860:FF:000005">
    <property type="entry name" value="C-1-tetrahydrofolate synthase, cytoplasmic, putative"/>
    <property type="match status" value="1"/>
</dbReference>
<dbReference type="Gene3D" id="3.40.50.10860">
    <property type="entry name" value="Leucine Dehydrogenase, chain A, domain 1"/>
    <property type="match status" value="1"/>
</dbReference>
<dbReference type="Gene3D" id="3.40.50.720">
    <property type="entry name" value="NAD(P)-binding Rossmann-like Domain"/>
    <property type="match status" value="1"/>
</dbReference>
<dbReference type="HAMAP" id="MF_01576">
    <property type="entry name" value="THF_DHG_CYH"/>
    <property type="match status" value="1"/>
</dbReference>
<dbReference type="InterPro" id="IPR046346">
    <property type="entry name" value="Aminoacid_DH-like_N_sf"/>
</dbReference>
<dbReference type="InterPro" id="IPR036291">
    <property type="entry name" value="NAD(P)-bd_dom_sf"/>
</dbReference>
<dbReference type="InterPro" id="IPR000672">
    <property type="entry name" value="THF_DH/CycHdrlase"/>
</dbReference>
<dbReference type="InterPro" id="IPR020630">
    <property type="entry name" value="THF_DH/CycHdrlase_cat_dom"/>
</dbReference>
<dbReference type="InterPro" id="IPR020867">
    <property type="entry name" value="THF_DH/CycHdrlase_CS"/>
</dbReference>
<dbReference type="InterPro" id="IPR020631">
    <property type="entry name" value="THF_DH/CycHdrlase_NAD-bd_dom"/>
</dbReference>
<dbReference type="NCBIfam" id="NF008058">
    <property type="entry name" value="PRK10792.1"/>
    <property type="match status" value="1"/>
</dbReference>
<dbReference type="PANTHER" id="PTHR48099:SF5">
    <property type="entry name" value="C-1-TETRAHYDROFOLATE SYNTHASE, CYTOPLASMIC"/>
    <property type="match status" value="1"/>
</dbReference>
<dbReference type="PANTHER" id="PTHR48099">
    <property type="entry name" value="C-1-TETRAHYDROFOLATE SYNTHASE, CYTOPLASMIC-RELATED"/>
    <property type="match status" value="1"/>
</dbReference>
<dbReference type="Pfam" id="PF00763">
    <property type="entry name" value="THF_DHG_CYH"/>
    <property type="match status" value="1"/>
</dbReference>
<dbReference type="Pfam" id="PF02882">
    <property type="entry name" value="THF_DHG_CYH_C"/>
    <property type="match status" value="1"/>
</dbReference>
<dbReference type="PRINTS" id="PR00085">
    <property type="entry name" value="THFDHDRGNASE"/>
</dbReference>
<dbReference type="SUPFAM" id="SSF53223">
    <property type="entry name" value="Aminoacid dehydrogenase-like, N-terminal domain"/>
    <property type="match status" value="1"/>
</dbReference>
<dbReference type="SUPFAM" id="SSF51735">
    <property type="entry name" value="NAD(P)-binding Rossmann-fold domains"/>
    <property type="match status" value="1"/>
</dbReference>
<dbReference type="PROSITE" id="PS00766">
    <property type="entry name" value="THF_DHG_CYH_1"/>
    <property type="match status" value="1"/>
</dbReference>
<dbReference type="PROSITE" id="PS00767">
    <property type="entry name" value="THF_DHG_CYH_2"/>
    <property type="match status" value="1"/>
</dbReference>